<protein>
    <recommendedName>
        <fullName evidence="6">Cilia- and flagella-associated protein 77</fullName>
    </recommendedName>
</protein>
<sequence>MPDPAKPGKDLTAWKKKKQPVHRTVSQICPPPRRPLTVVDIRTGMENERLGVVRDSMFQNPLIVKAELGKPRERSCSLPGINFNYGLYIRGLDGGVPEAIGHWNVFKQQPTCPHELTRNYIAMNRGAVKAGLVTARENMLYRELNDIRINDQEDRRQKEPPPIPPNMTFGIRSRPSTPFFDLLQHRYQQLWVQEQKATQQAIKMEKKQKVILGKLYETRSSQLRKYKPPVKLDALWHMPHFKKVASHLATFPTEADRQRALKAHKEEYAVRQGTLRMGNYTHP</sequence>
<gene>
    <name evidence="5 7" type="primary">Cfap77</name>
</gene>
<comment type="function">
    <text evidence="3 4">Microtubule inner protein (MIP) part of the dynein-decorated doublet microtubules (DMTs) in cilia axoneme, which is required for motile cilia beating.</text>
</comment>
<comment type="subunit">
    <text evidence="3 4">Microtubule inner protein component of sperm flagellar doublet microtubules.</text>
</comment>
<comment type="subcellular location">
    <subcellularLocation>
        <location evidence="1">Cytoplasm</location>
        <location evidence="1">Cytoskeleton</location>
        <location evidence="1">Cilium axoneme</location>
    </subcellularLocation>
    <subcellularLocation>
        <location evidence="3 4">Cytoplasm</location>
        <location evidence="3 4">Cytoskeleton</location>
        <location evidence="3 4">Flagellum axoneme</location>
    </subcellularLocation>
</comment>
<comment type="alternative products">
    <event type="alternative splicing"/>
    <isoform>
        <id>A0A087WRI3-1</id>
        <name>1</name>
        <sequence type="displayed"/>
    </isoform>
    <isoform>
        <id>A0A087WRI3-2</id>
        <name>2</name>
        <sequence type="described" ref="VSP_062407 VSP_062408"/>
    </isoform>
</comment>
<comment type="similarity">
    <text evidence="6">Belongs to the CFAP77 family.</text>
</comment>
<feature type="chain" id="PRO_0000461078" description="Cilia- and flagella-associated protein 77">
    <location>
        <begin position="1"/>
        <end position="283"/>
    </location>
</feature>
<feature type="region of interest" description="Disordered" evidence="2">
    <location>
        <begin position="151"/>
        <end position="170"/>
    </location>
</feature>
<feature type="splice variant" id="VSP_062407" description="In isoform 2.">
    <original>ASHLATFPTEADRQRALKAHKEEYAVR</original>
    <variation>CWDCRGRLWQLTSCGFWRFELLILVQH</variation>
    <location>
        <begin position="245"/>
        <end position="271"/>
    </location>
</feature>
<feature type="splice variant" id="VSP_062408" description="In isoform 2.">
    <location>
        <begin position="272"/>
        <end position="283"/>
    </location>
</feature>
<accession>A0A087WRI3</accession>
<accession>B2RWG1</accession>
<reference key="1">
    <citation type="journal article" date="2009" name="PLoS Biol.">
        <title>Lineage-specific biology revealed by a finished genome assembly of the mouse.</title>
        <authorList>
            <person name="Church D.M."/>
            <person name="Goodstadt L."/>
            <person name="Hillier L.W."/>
            <person name="Zody M.C."/>
            <person name="Goldstein S."/>
            <person name="She X."/>
            <person name="Bult C.J."/>
            <person name="Agarwala R."/>
            <person name="Cherry J.L."/>
            <person name="DiCuccio M."/>
            <person name="Hlavina W."/>
            <person name="Kapustin Y."/>
            <person name="Meric P."/>
            <person name="Maglott D."/>
            <person name="Birtle Z."/>
            <person name="Marques A.C."/>
            <person name="Graves T."/>
            <person name="Zhou S."/>
            <person name="Teague B."/>
            <person name="Potamousis K."/>
            <person name="Churas C."/>
            <person name="Place M."/>
            <person name="Herschleb J."/>
            <person name="Runnheim R."/>
            <person name="Forrest D."/>
            <person name="Amos-Landgraf J."/>
            <person name="Schwartz D.C."/>
            <person name="Cheng Z."/>
            <person name="Lindblad-Toh K."/>
            <person name="Eichler E.E."/>
            <person name="Ponting C.P."/>
        </authorList>
    </citation>
    <scope>NUCLEOTIDE SEQUENCE [LARGE SCALE GENOMIC DNA]</scope>
    <source>
        <strain>C57BL/6J</strain>
    </source>
</reference>
<reference key="2">
    <citation type="journal article" date="2004" name="Genome Res.">
        <title>The status, quality, and expansion of the NIH full-length cDNA project: the Mammalian Gene Collection (MGC).</title>
        <authorList>
            <consortium name="The MGC Project Team"/>
        </authorList>
    </citation>
    <scope>NUCLEOTIDE SEQUENCE [LARGE SCALE MRNA] (ISOFORM 2)</scope>
    <source>
        <tissue>Brain</tissue>
    </source>
</reference>
<reference evidence="10" key="3">
    <citation type="journal article" date="2023" name="Cell">
        <title>Structures of sperm flagellar doublet microtubules expand the genetic spectrum of male infertility.</title>
        <authorList>
            <person name="Zhou L."/>
            <person name="Liu H."/>
            <person name="Liu S."/>
            <person name="Yang X."/>
            <person name="Dong Y."/>
            <person name="Pan Y."/>
            <person name="Xiao Z."/>
            <person name="Zheng B."/>
            <person name="Sun Y."/>
            <person name="Huang P."/>
            <person name="Zhang X."/>
            <person name="Hu J."/>
            <person name="Sun R."/>
            <person name="Feng S."/>
            <person name="Zhu Y."/>
            <person name="Liu M."/>
            <person name="Gui M."/>
            <person name="Wu J."/>
        </authorList>
    </citation>
    <scope>STRUCTURE BY ELECTRON MICROSCOPY (3.50 ANGSTROMS) OF SPERM FLAGELLAR DOUBLET MICROTUBULES</scope>
    <scope>FUNCTION</scope>
    <scope>SUBCELLULAR LOCATION</scope>
    <scope>SUBUNIT</scope>
</reference>
<reference evidence="8 9" key="4">
    <citation type="journal article" date="2023" name="Cell Discov.">
        <title>In-cell structural insight into the stability of sperm microtubule doublet.</title>
        <authorList>
            <person name="Tai L."/>
            <person name="Yin G."/>
            <person name="Huang X."/>
            <person name="Sun F."/>
            <person name="Zhu Y."/>
        </authorList>
    </citation>
    <scope>STRUCTURE BY ELECTRON MICROSCOPY (4.50 ANGSTROMS)</scope>
    <scope>FUNCTION</scope>
    <scope>SUBUNIT</scope>
    <scope>SUBCELLULAR LOCATION</scope>
</reference>
<evidence type="ECO:0000250" key="1">
    <source>
        <dbReference type="UniProtKB" id="Q6ZQR2"/>
    </source>
</evidence>
<evidence type="ECO:0000256" key="2">
    <source>
        <dbReference type="SAM" id="MobiDB-lite"/>
    </source>
</evidence>
<evidence type="ECO:0000269" key="3">
    <source>
    </source>
</evidence>
<evidence type="ECO:0000269" key="4">
    <source>
    </source>
</evidence>
<evidence type="ECO:0000303" key="5">
    <source>
    </source>
</evidence>
<evidence type="ECO:0000305" key="6"/>
<evidence type="ECO:0000312" key="7">
    <source>
        <dbReference type="MGI" id="MGI:2685669"/>
    </source>
</evidence>
<evidence type="ECO:0007744" key="8">
    <source>
        <dbReference type="PDB" id="8I7O"/>
    </source>
</evidence>
<evidence type="ECO:0007744" key="9">
    <source>
        <dbReference type="PDB" id="8I7R"/>
    </source>
</evidence>
<evidence type="ECO:0007744" key="10">
    <source>
        <dbReference type="PDB" id="8IYJ"/>
    </source>
</evidence>
<dbReference type="EMBL" id="BC147760">
    <property type="protein sequence ID" value="AAI47761.1"/>
    <property type="molecule type" value="mRNA"/>
</dbReference>
<dbReference type="EMBL" id="BC147761">
    <property type="protein sequence ID" value="AAI47762.1"/>
    <property type="molecule type" value="mRNA"/>
</dbReference>
<dbReference type="CCDS" id="CCDS50551.1">
    <molecule id="A0A087WRI3-2"/>
</dbReference>
<dbReference type="RefSeq" id="NP_001160177.1">
    <molecule id="A0A087WRI3-2"/>
    <property type="nucleotide sequence ID" value="NM_001166705.1"/>
</dbReference>
<dbReference type="RefSeq" id="NP_001422990.1">
    <molecule id="A0A087WRI3-1"/>
    <property type="nucleotide sequence ID" value="NM_001436061.1"/>
</dbReference>
<dbReference type="RefSeq" id="XP_006498195.1">
    <property type="nucleotide sequence ID" value="XM_006498132.2"/>
</dbReference>
<dbReference type="PDB" id="8I7O">
    <property type="method" value="EM"/>
    <property type="resolution" value="4.50 A"/>
    <property type="chains" value="R2=1-283"/>
</dbReference>
<dbReference type="PDB" id="8I7R">
    <property type="method" value="EM"/>
    <property type="resolution" value="6.50 A"/>
    <property type="chains" value="R1/R2/R3=1-283"/>
</dbReference>
<dbReference type="PDB" id="8IYJ">
    <property type="method" value="EM"/>
    <property type="resolution" value="3.50 A"/>
    <property type="chains" value="J1/J2/J3/J4/J5=1-283"/>
</dbReference>
<dbReference type="PDBsum" id="8I7O"/>
<dbReference type="PDBsum" id="8I7R"/>
<dbReference type="PDBsum" id="8IYJ"/>
<dbReference type="EMDB" id="EMD-35229"/>
<dbReference type="EMDB" id="EMD-35230"/>
<dbReference type="EMDB" id="EMD-35823"/>
<dbReference type="SMR" id="A0A087WRI3"/>
<dbReference type="PhosphoSitePlus" id="A0A087WRI3"/>
<dbReference type="PaxDb" id="10090-ENSMUSP00000125742"/>
<dbReference type="ProteomicsDB" id="306689"/>
<dbReference type="ProteomicsDB" id="333068"/>
<dbReference type="Antibodypedia" id="18193">
    <property type="antibodies" value="21 antibodies from 8 providers"/>
</dbReference>
<dbReference type="Ensembl" id="ENSMUST00000157048.4">
    <molecule id="A0A087WRI3-2"/>
    <property type="protein sequence ID" value="ENSMUSP00000125742.2"/>
    <property type="gene ID" value="ENSMUSG00000079502.9"/>
</dbReference>
<dbReference type="Ensembl" id="ENSMUST00000189711.7">
    <molecule id="A0A087WRI3-1"/>
    <property type="protein sequence ID" value="ENSMUSP00000140645.2"/>
    <property type="gene ID" value="ENSMUSG00000079502.9"/>
</dbReference>
<dbReference type="GeneID" id="329375"/>
<dbReference type="KEGG" id="mmu:329375"/>
<dbReference type="AGR" id="MGI:2685669"/>
<dbReference type="CTD" id="389799"/>
<dbReference type="MGI" id="MGI:2685669">
    <property type="gene designation" value="Cfap77"/>
</dbReference>
<dbReference type="VEuPathDB" id="HostDB:ENSMUSG00000079502"/>
<dbReference type="eggNOG" id="ENOG502S0WI">
    <property type="taxonomic scope" value="Eukaryota"/>
</dbReference>
<dbReference type="GeneTree" id="ENSGT00390000014476"/>
<dbReference type="HOGENOM" id="CLU_060116_0_0_1"/>
<dbReference type="InParanoid" id="A0A087WRI3"/>
<dbReference type="OMA" id="QPTCPQE"/>
<dbReference type="OrthoDB" id="4786at9989"/>
<dbReference type="PhylomeDB" id="A0A087WRI3"/>
<dbReference type="TreeFam" id="TF329723"/>
<dbReference type="BioGRID-ORCS" id="329375">
    <property type="hits" value="2 hits in 47 CRISPR screens"/>
</dbReference>
<dbReference type="ChiTaRS" id="Cfap77">
    <property type="organism name" value="mouse"/>
</dbReference>
<dbReference type="Proteomes" id="UP000000589">
    <property type="component" value="Chromosome 2"/>
</dbReference>
<dbReference type="RNAct" id="A0A087WRI3">
    <property type="molecule type" value="protein"/>
</dbReference>
<dbReference type="Bgee" id="ENSMUSG00000079502">
    <property type="expression patterns" value="Expressed in testis and 41 other cell types or tissues"/>
</dbReference>
<dbReference type="ExpressionAtlas" id="A0A087WRI3">
    <property type="expression patterns" value="baseline and differential"/>
</dbReference>
<dbReference type="GO" id="GO:0160112">
    <property type="term" value="C:axonemal B tubule inner sheath"/>
    <property type="evidence" value="ECO:0000314"/>
    <property type="project" value="UniProtKB"/>
</dbReference>
<dbReference type="GO" id="GO:0036126">
    <property type="term" value="C:sperm flagellum"/>
    <property type="evidence" value="ECO:0000314"/>
    <property type="project" value="UniProtKB"/>
</dbReference>
<dbReference type="GO" id="GO:0030317">
    <property type="term" value="P:flagellated sperm motility"/>
    <property type="evidence" value="ECO:0000314"/>
    <property type="project" value="UniProtKB"/>
</dbReference>
<dbReference type="InterPro" id="IPR029147">
    <property type="entry name" value="CFAP77"/>
</dbReference>
<dbReference type="PANTHER" id="PTHR28617">
    <property type="entry name" value="CILIA- AND FLAGELLA-ASSOCIATED PROTEIN 77"/>
    <property type="match status" value="1"/>
</dbReference>
<dbReference type="PANTHER" id="PTHR28617:SF1">
    <property type="entry name" value="CILIA- AND FLAGELLA-ASSOCIATED PROTEIN 77"/>
    <property type="match status" value="1"/>
</dbReference>
<dbReference type="Pfam" id="PF14825">
    <property type="entry name" value="CFAP77"/>
    <property type="match status" value="1"/>
</dbReference>
<keyword id="KW-0002">3D-structure</keyword>
<keyword id="KW-0025">Alternative splicing</keyword>
<keyword id="KW-0966">Cell projection</keyword>
<keyword id="KW-0969">Cilium</keyword>
<keyword id="KW-0963">Cytoplasm</keyword>
<keyword id="KW-0206">Cytoskeleton</keyword>
<keyword id="KW-0282">Flagellum</keyword>
<keyword id="KW-1185">Reference proteome</keyword>
<name>CFA77_MOUSE</name>
<organism>
    <name type="scientific">Mus musculus</name>
    <name type="common">Mouse</name>
    <dbReference type="NCBI Taxonomy" id="10090"/>
    <lineage>
        <taxon>Eukaryota</taxon>
        <taxon>Metazoa</taxon>
        <taxon>Chordata</taxon>
        <taxon>Craniata</taxon>
        <taxon>Vertebrata</taxon>
        <taxon>Euteleostomi</taxon>
        <taxon>Mammalia</taxon>
        <taxon>Eutheria</taxon>
        <taxon>Euarchontoglires</taxon>
        <taxon>Glires</taxon>
        <taxon>Rodentia</taxon>
        <taxon>Myomorpha</taxon>
        <taxon>Muroidea</taxon>
        <taxon>Muridae</taxon>
        <taxon>Murinae</taxon>
        <taxon>Mus</taxon>
        <taxon>Mus</taxon>
    </lineage>
</organism>
<proteinExistence type="evidence at protein level"/>